<comment type="function">
    <text evidence="1">DNA ligase that catalyzes the formation of phosphodiester linkages between 5'-phosphoryl and 3'-hydroxyl groups in double-stranded DNA using NAD as a coenzyme and as the energy source for the reaction. It is essential for DNA replication and repair of damaged DNA.</text>
</comment>
<comment type="catalytic activity">
    <reaction evidence="1">
        <text>NAD(+) + (deoxyribonucleotide)n-3'-hydroxyl + 5'-phospho-(deoxyribonucleotide)m = (deoxyribonucleotide)n+m + AMP + beta-nicotinamide D-nucleotide.</text>
        <dbReference type="EC" id="6.5.1.2"/>
    </reaction>
</comment>
<comment type="cofactor">
    <cofactor evidence="1">
        <name>Mg(2+)</name>
        <dbReference type="ChEBI" id="CHEBI:18420"/>
    </cofactor>
    <cofactor evidence="1">
        <name>Mn(2+)</name>
        <dbReference type="ChEBI" id="CHEBI:29035"/>
    </cofactor>
</comment>
<comment type="similarity">
    <text evidence="1">Belongs to the NAD-dependent DNA ligase family. LigA subfamily.</text>
</comment>
<organism>
    <name type="scientific">Nocardia farcinica (strain IFM 10152)</name>
    <dbReference type="NCBI Taxonomy" id="247156"/>
    <lineage>
        <taxon>Bacteria</taxon>
        <taxon>Bacillati</taxon>
        <taxon>Actinomycetota</taxon>
        <taxon>Actinomycetes</taxon>
        <taxon>Mycobacteriales</taxon>
        <taxon>Nocardiaceae</taxon>
        <taxon>Nocardia</taxon>
    </lineage>
</organism>
<name>DNLJ2_NOCFA</name>
<accession>Q5YRS7</accession>
<dbReference type="EC" id="6.5.1.2" evidence="1"/>
<dbReference type="EMBL" id="AP006618">
    <property type="protein sequence ID" value="BAD59114.1"/>
    <property type="molecule type" value="Genomic_DNA"/>
</dbReference>
<dbReference type="SMR" id="Q5YRS7"/>
<dbReference type="STRING" id="247156.NFA_42650"/>
<dbReference type="GeneID" id="61134895"/>
<dbReference type="KEGG" id="nfa:NFA_42650"/>
<dbReference type="eggNOG" id="COG0272">
    <property type="taxonomic scope" value="Bacteria"/>
</dbReference>
<dbReference type="HOGENOM" id="CLU_007764_2_1_11"/>
<dbReference type="OrthoDB" id="9759736at2"/>
<dbReference type="Proteomes" id="UP000006820">
    <property type="component" value="Chromosome"/>
</dbReference>
<dbReference type="GO" id="GO:0005829">
    <property type="term" value="C:cytosol"/>
    <property type="evidence" value="ECO:0007669"/>
    <property type="project" value="TreeGrafter"/>
</dbReference>
<dbReference type="GO" id="GO:0003911">
    <property type="term" value="F:DNA ligase (NAD+) activity"/>
    <property type="evidence" value="ECO:0007669"/>
    <property type="project" value="UniProtKB-UniRule"/>
</dbReference>
<dbReference type="GO" id="GO:0046872">
    <property type="term" value="F:metal ion binding"/>
    <property type="evidence" value="ECO:0007669"/>
    <property type="project" value="UniProtKB-KW"/>
</dbReference>
<dbReference type="GO" id="GO:0006281">
    <property type="term" value="P:DNA repair"/>
    <property type="evidence" value="ECO:0007669"/>
    <property type="project" value="UniProtKB-KW"/>
</dbReference>
<dbReference type="GO" id="GO:0006260">
    <property type="term" value="P:DNA replication"/>
    <property type="evidence" value="ECO:0007669"/>
    <property type="project" value="UniProtKB-KW"/>
</dbReference>
<dbReference type="CDD" id="cd17748">
    <property type="entry name" value="BRCT_DNA_ligase_like"/>
    <property type="match status" value="1"/>
</dbReference>
<dbReference type="CDD" id="cd00114">
    <property type="entry name" value="LIGANc"/>
    <property type="match status" value="1"/>
</dbReference>
<dbReference type="FunFam" id="1.10.150.20:FF:000006">
    <property type="entry name" value="DNA ligase"/>
    <property type="match status" value="1"/>
</dbReference>
<dbReference type="FunFam" id="1.10.287.610:FF:000002">
    <property type="entry name" value="DNA ligase"/>
    <property type="match status" value="1"/>
</dbReference>
<dbReference type="FunFam" id="2.40.50.140:FF:000012">
    <property type="entry name" value="DNA ligase"/>
    <property type="match status" value="1"/>
</dbReference>
<dbReference type="FunFam" id="3.30.470.30:FF:000001">
    <property type="entry name" value="DNA ligase"/>
    <property type="match status" value="1"/>
</dbReference>
<dbReference type="FunFam" id="3.40.50.10190:FF:000054">
    <property type="entry name" value="DNA ligase"/>
    <property type="match status" value="1"/>
</dbReference>
<dbReference type="Gene3D" id="6.20.10.30">
    <property type="match status" value="1"/>
</dbReference>
<dbReference type="Gene3D" id="1.10.150.20">
    <property type="entry name" value="5' to 3' exonuclease, C-terminal subdomain"/>
    <property type="match status" value="2"/>
</dbReference>
<dbReference type="Gene3D" id="3.40.50.10190">
    <property type="entry name" value="BRCT domain"/>
    <property type="match status" value="1"/>
</dbReference>
<dbReference type="Gene3D" id="3.30.470.30">
    <property type="entry name" value="DNA ligase/mRNA capping enzyme"/>
    <property type="match status" value="1"/>
</dbReference>
<dbReference type="Gene3D" id="1.10.287.610">
    <property type="entry name" value="Helix hairpin bin"/>
    <property type="match status" value="1"/>
</dbReference>
<dbReference type="Gene3D" id="2.40.50.140">
    <property type="entry name" value="Nucleic acid-binding proteins"/>
    <property type="match status" value="1"/>
</dbReference>
<dbReference type="HAMAP" id="MF_01588">
    <property type="entry name" value="DNA_ligase_A"/>
    <property type="match status" value="1"/>
</dbReference>
<dbReference type="InterPro" id="IPR001357">
    <property type="entry name" value="BRCT_dom"/>
</dbReference>
<dbReference type="InterPro" id="IPR036420">
    <property type="entry name" value="BRCT_dom_sf"/>
</dbReference>
<dbReference type="InterPro" id="IPR041663">
    <property type="entry name" value="DisA/LigA_HHH"/>
</dbReference>
<dbReference type="InterPro" id="IPR001679">
    <property type="entry name" value="DNA_ligase"/>
</dbReference>
<dbReference type="InterPro" id="IPR018239">
    <property type="entry name" value="DNA_ligase_AS"/>
</dbReference>
<dbReference type="InterPro" id="IPR033136">
    <property type="entry name" value="DNA_ligase_CS"/>
</dbReference>
<dbReference type="InterPro" id="IPR013839">
    <property type="entry name" value="DNAligase_adenylation"/>
</dbReference>
<dbReference type="InterPro" id="IPR013840">
    <property type="entry name" value="DNAligase_N"/>
</dbReference>
<dbReference type="InterPro" id="IPR012340">
    <property type="entry name" value="NA-bd_OB-fold"/>
</dbReference>
<dbReference type="InterPro" id="IPR004150">
    <property type="entry name" value="NAD_DNA_ligase_OB"/>
</dbReference>
<dbReference type="InterPro" id="IPR010994">
    <property type="entry name" value="RuvA_2-like"/>
</dbReference>
<dbReference type="InterPro" id="IPR004149">
    <property type="entry name" value="Znf_DNAligase_C4"/>
</dbReference>
<dbReference type="NCBIfam" id="TIGR00575">
    <property type="entry name" value="dnlj"/>
    <property type="match status" value="1"/>
</dbReference>
<dbReference type="NCBIfam" id="NF005932">
    <property type="entry name" value="PRK07956.1"/>
    <property type="match status" value="1"/>
</dbReference>
<dbReference type="PANTHER" id="PTHR23389">
    <property type="entry name" value="CHROMOSOME TRANSMISSION FIDELITY FACTOR 18"/>
    <property type="match status" value="1"/>
</dbReference>
<dbReference type="PANTHER" id="PTHR23389:SF9">
    <property type="entry name" value="DNA LIGASE"/>
    <property type="match status" value="1"/>
</dbReference>
<dbReference type="Pfam" id="PF00533">
    <property type="entry name" value="BRCT"/>
    <property type="match status" value="1"/>
</dbReference>
<dbReference type="Pfam" id="PF01653">
    <property type="entry name" value="DNA_ligase_aden"/>
    <property type="match status" value="1"/>
</dbReference>
<dbReference type="Pfam" id="PF03120">
    <property type="entry name" value="DNA_ligase_OB"/>
    <property type="match status" value="1"/>
</dbReference>
<dbReference type="Pfam" id="PF03119">
    <property type="entry name" value="DNA_ligase_ZBD"/>
    <property type="match status" value="1"/>
</dbReference>
<dbReference type="Pfam" id="PF12826">
    <property type="entry name" value="HHH_2"/>
    <property type="match status" value="1"/>
</dbReference>
<dbReference type="Pfam" id="PF22745">
    <property type="entry name" value="Nlig-Ia"/>
    <property type="match status" value="1"/>
</dbReference>
<dbReference type="PIRSF" id="PIRSF001604">
    <property type="entry name" value="LigA"/>
    <property type="match status" value="1"/>
</dbReference>
<dbReference type="SMART" id="SM00292">
    <property type="entry name" value="BRCT"/>
    <property type="match status" value="1"/>
</dbReference>
<dbReference type="SMART" id="SM00532">
    <property type="entry name" value="LIGANc"/>
    <property type="match status" value="1"/>
</dbReference>
<dbReference type="SUPFAM" id="SSF52113">
    <property type="entry name" value="BRCT domain"/>
    <property type="match status" value="1"/>
</dbReference>
<dbReference type="SUPFAM" id="SSF56091">
    <property type="entry name" value="DNA ligase/mRNA capping enzyme, catalytic domain"/>
    <property type="match status" value="1"/>
</dbReference>
<dbReference type="SUPFAM" id="SSF50249">
    <property type="entry name" value="Nucleic acid-binding proteins"/>
    <property type="match status" value="1"/>
</dbReference>
<dbReference type="SUPFAM" id="SSF47781">
    <property type="entry name" value="RuvA domain 2-like"/>
    <property type="match status" value="1"/>
</dbReference>
<dbReference type="PROSITE" id="PS50172">
    <property type="entry name" value="BRCT"/>
    <property type="match status" value="1"/>
</dbReference>
<dbReference type="PROSITE" id="PS01055">
    <property type="entry name" value="DNA_LIGASE_N1"/>
    <property type="match status" value="1"/>
</dbReference>
<dbReference type="PROSITE" id="PS01056">
    <property type="entry name" value="DNA_LIGASE_N2"/>
    <property type="match status" value="1"/>
</dbReference>
<keyword id="KW-0227">DNA damage</keyword>
<keyword id="KW-0234">DNA repair</keyword>
<keyword id="KW-0235">DNA replication</keyword>
<keyword id="KW-0436">Ligase</keyword>
<keyword id="KW-0460">Magnesium</keyword>
<keyword id="KW-0464">Manganese</keyword>
<keyword id="KW-0479">Metal-binding</keyword>
<keyword id="KW-0520">NAD</keyword>
<keyword id="KW-1185">Reference proteome</keyword>
<keyword id="KW-0862">Zinc</keyword>
<sequence>MRWQRLAEEVREHQFRYYVRDAPIISDGEFDALLRELQELEDRHPDLRTPDSPTQLVGGGFATDFTPVDHLERMLSLDNVFDVDELRAWAARVEAETGPDLHYLCEVKIDGVALNLVYERGKLVRAATRGDGRTGEDVTLNARTIEDVPGELSAGGEFPVPELLEVRGEVYLRLADFEALNAAIVAEGKPPYANPRNTAAGSLRQKDPAVTARRRLRMICHGLGRIEGYTPASQFEAYRALSAWGLPVSEHTRRVRGIDAVIERVAYWGEHRHDIEHEIDGQVIKVDETSLQRRLGATSRAPRWAIAYKYPPEEATTKLRAIEVNVGRTGRVTPFAVMEPVVIAGSTVAMATLHNASEVKRKGVLIGDTVTIRKAGDVIPEVLGPVVDARTGAEREFVMPTHCPECGTELAPEKEGDADIRCPNQRSCPAQLRERVYHVAGRSAFDIEALGYEAAIDLLQSGAIGDEGDLFDLDEARLLTTSLFTNKNGSLSANGKRLLENLDAAKDRPLWRVLVGLSIRHVGPTAARALAAEFGSMERIEQASVDELAATDGVGPTIAAAVAEWFTVDWHRAIVAKWRAAGVRMVDERDESIERTLEGLSIVVTGSLQGFSRDGAKEAILARGGKAAGSVSKKTAFVVVGDAPGAKAAKAEELGVPILDEEGFVRLLAEGPAAVAAEEPESG</sequence>
<reference key="1">
    <citation type="journal article" date="2004" name="Proc. Natl. Acad. Sci. U.S.A.">
        <title>The complete genomic sequence of Nocardia farcinica IFM 10152.</title>
        <authorList>
            <person name="Ishikawa J."/>
            <person name="Yamashita A."/>
            <person name="Mikami Y."/>
            <person name="Hoshino Y."/>
            <person name="Kurita H."/>
            <person name="Hotta K."/>
            <person name="Shiba T."/>
            <person name="Hattori M."/>
        </authorList>
    </citation>
    <scope>NUCLEOTIDE SEQUENCE [LARGE SCALE GENOMIC DNA]</scope>
    <source>
        <strain>IFM 10152</strain>
    </source>
</reference>
<evidence type="ECO:0000255" key="1">
    <source>
        <dbReference type="HAMAP-Rule" id="MF_01588"/>
    </source>
</evidence>
<feature type="chain" id="PRO_0000313343" description="DNA ligase 2">
    <location>
        <begin position="1"/>
        <end position="683"/>
    </location>
</feature>
<feature type="domain" description="BRCT" evidence="1">
    <location>
        <begin position="592"/>
        <end position="681"/>
    </location>
</feature>
<feature type="active site" description="N6-AMP-lysine intermediate" evidence="1">
    <location>
        <position position="108"/>
    </location>
</feature>
<feature type="binding site" evidence="1">
    <location>
        <begin position="27"/>
        <end position="31"/>
    </location>
    <ligand>
        <name>NAD(+)</name>
        <dbReference type="ChEBI" id="CHEBI:57540"/>
    </ligand>
</feature>
<feature type="binding site" evidence="1">
    <location>
        <begin position="76"/>
        <end position="77"/>
    </location>
    <ligand>
        <name>NAD(+)</name>
        <dbReference type="ChEBI" id="CHEBI:57540"/>
    </ligand>
</feature>
<feature type="binding site" evidence="1">
    <location>
        <position position="106"/>
    </location>
    <ligand>
        <name>NAD(+)</name>
        <dbReference type="ChEBI" id="CHEBI:57540"/>
    </ligand>
</feature>
<feature type="binding site" evidence="1">
    <location>
        <position position="129"/>
    </location>
    <ligand>
        <name>NAD(+)</name>
        <dbReference type="ChEBI" id="CHEBI:57540"/>
    </ligand>
</feature>
<feature type="binding site" evidence="1">
    <location>
        <position position="169"/>
    </location>
    <ligand>
        <name>NAD(+)</name>
        <dbReference type="ChEBI" id="CHEBI:57540"/>
    </ligand>
</feature>
<feature type="binding site" evidence="1">
    <location>
        <position position="285"/>
    </location>
    <ligand>
        <name>NAD(+)</name>
        <dbReference type="ChEBI" id="CHEBI:57540"/>
    </ligand>
</feature>
<feature type="binding site" evidence="1">
    <location>
        <position position="309"/>
    </location>
    <ligand>
        <name>NAD(+)</name>
        <dbReference type="ChEBI" id="CHEBI:57540"/>
    </ligand>
</feature>
<feature type="binding site" evidence="1">
    <location>
        <position position="403"/>
    </location>
    <ligand>
        <name>Zn(2+)</name>
        <dbReference type="ChEBI" id="CHEBI:29105"/>
    </ligand>
</feature>
<feature type="binding site" evidence="1">
    <location>
        <position position="406"/>
    </location>
    <ligand>
        <name>Zn(2+)</name>
        <dbReference type="ChEBI" id="CHEBI:29105"/>
    </ligand>
</feature>
<feature type="binding site" evidence="1">
    <location>
        <position position="422"/>
    </location>
    <ligand>
        <name>Zn(2+)</name>
        <dbReference type="ChEBI" id="CHEBI:29105"/>
    </ligand>
</feature>
<feature type="binding site" evidence="1">
    <location>
        <position position="428"/>
    </location>
    <ligand>
        <name>Zn(2+)</name>
        <dbReference type="ChEBI" id="CHEBI:29105"/>
    </ligand>
</feature>
<proteinExistence type="inferred from homology"/>
<protein>
    <recommendedName>
        <fullName evidence="1">DNA ligase 2</fullName>
        <ecNumber evidence="1">6.5.1.2</ecNumber>
    </recommendedName>
    <alternativeName>
        <fullName evidence="1">Polydeoxyribonucleotide synthase [NAD(+)] 2</fullName>
    </alternativeName>
</protein>
<gene>
    <name evidence="1" type="primary">ligA2</name>
    <name type="ordered locus">NFA_42650</name>
</gene>